<protein>
    <recommendedName>
        <fullName>Pre-mRNA-splicing factor cwf19</fullName>
    </recommendedName>
    <alternativeName>
        <fullName>Complexed with cdc5 protein 19</fullName>
    </alternativeName>
</protein>
<evidence type="ECO:0000256" key="1">
    <source>
        <dbReference type="SAM" id="MobiDB-lite"/>
    </source>
</evidence>
<evidence type="ECO:0000269" key="2">
    <source>
    </source>
</evidence>
<evidence type="ECO:0000305" key="3"/>
<name>CWF19_SCHPO</name>
<comment type="function">
    <text>Involved in mRNA splicing where it associates with cdc5 and the other cwf proteins as part of the spliceosome.</text>
</comment>
<comment type="function">
    <text>Involved in mRNA splicing.</text>
</comment>
<comment type="subunit">
    <text evidence="2">Belongs to the 40S cdc5-associated complex (or cwf complex), a spliceosome sub-complex reminiscent of a late-stage spliceosome composed of the U2, U5 and U6 snRNAs and at least brr2, cdc5, cwf2/prp3, cwf3/syf1, cwf4/syf3, cwf5/ecm2, spp42/cwf6, cwf7/spf27, cwf8, cwf9, cwf10, cwf11, cwf12, prp45/cwf13, cwf14, cwf15, cwf16, cwf17, cwf18, cwf19, cwf20, cwf21, cwf22, cwf23, cwf24, cwf25, cwf26, cyp7/cwf27, cwf28, cwf29/ist3, lea1, msl1, prp5/cwf1, prp10, prp12/sap130, prp17, prp22, sap61, sap62, sap114, sap145, slu7, smb1, smd1, smd3, smf1, smg1 and syf2.</text>
</comment>
<comment type="subcellular location">
    <subcellularLocation>
        <location evidence="3">Nucleus</location>
    </subcellularLocation>
</comment>
<comment type="similarity">
    <text evidence="3">Belongs to the CWF19 family.</text>
</comment>
<reference key="1">
    <citation type="journal article" date="2002" name="Nature">
        <title>The genome sequence of Schizosaccharomyces pombe.</title>
        <authorList>
            <person name="Wood V."/>
            <person name="Gwilliam R."/>
            <person name="Rajandream M.A."/>
            <person name="Lyne M.H."/>
            <person name="Lyne R."/>
            <person name="Stewart A."/>
            <person name="Sgouros J.G."/>
            <person name="Peat N."/>
            <person name="Hayles J."/>
            <person name="Baker S.G."/>
            <person name="Basham D."/>
            <person name="Bowman S."/>
            <person name="Brooks K."/>
            <person name="Brown D."/>
            <person name="Brown S."/>
            <person name="Chillingworth T."/>
            <person name="Churcher C.M."/>
            <person name="Collins M."/>
            <person name="Connor R."/>
            <person name="Cronin A."/>
            <person name="Davis P."/>
            <person name="Feltwell T."/>
            <person name="Fraser A."/>
            <person name="Gentles S."/>
            <person name="Goble A."/>
            <person name="Hamlin N."/>
            <person name="Harris D.E."/>
            <person name="Hidalgo J."/>
            <person name="Hodgson G."/>
            <person name="Holroyd S."/>
            <person name="Hornsby T."/>
            <person name="Howarth S."/>
            <person name="Huckle E.J."/>
            <person name="Hunt S."/>
            <person name="Jagels K."/>
            <person name="James K.D."/>
            <person name="Jones L."/>
            <person name="Jones M."/>
            <person name="Leather S."/>
            <person name="McDonald S."/>
            <person name="McLean J."/>
            <person name="Mooney P."/>
            <person name="Moule S."/>
            <person name="Mungall K.L."/>
            <person name="Murphy L.D."/>
            <person name="Niblett D."/>
            <person name="Odell C."/>
            <person name="Oliver K."/>
            <person name="O'Neil S."/>
            <person name="Pearson D."/>
            <person name="Quail M.A."/>
            <person name="Rabbinowitsch E."/>
            <person name="Rutherford K.M."/>
            <person name="Rutter S."/>
            <person name="Saunders D."/>
            <person name="Seeger K."/>
            <person name="Sharp S."/>
            <person name="Skelton J."/>
            <person name="Simmonds M.N."/>
            <person name="Squares R."/>
            <person name="Squares S."/>
            <person name="Stevens K."/>
            <person name="Taylor K."/>
            <person name="Taylor R.G."/>
            <person name="Tivey A."/>
            <person name="Walsh S.V."/>
            <person name="Warren T."/>
            <person name="Whitehead S."/>
            <person name="Woodward J.R."/>
            <person name="Volckaert G."/>
            <person name="Aert R."/>
            <person name="Robben J."/>
            <person name="Grymonprez B."/>
            <person name="Weltjens I."/>
            <person name="Vanstreels E."/>
            <person name="Rieger M."/>
            <person name="Schaefer M."/>
            <person name="Mueller-Auer S."/>
            <person name="Gabel C."/>
            <person name="Fuchs M."/>
            <person name="Duesterhoeft A."/>
            <person name="Fritzc C."/>
            <person name="Holzer E."/>
            <person name="Moestl D."/>
            <person name="Hilbert H."/>
            <person name="Borzym K."/>
            <person name="Langer I."/>
            <person name="Beck A."/>
            <person name="Lehrach H."/>
            <person name="Reinhardt R."/>
            <person name="Pohl T.M."/>
            <person name="Eger P."/>
            <person name="Zimmermann W."/>
            <person name="Wedler H."/>
            <person name="Wambutt R."/>
            <person name="Purnelle B."/>
            <person name="Goffeau A."/>
            <person name="Cadieu E."/>
            <person name="Dreano S."/>
            <person name="Gloux S."/>
            <person name="Lelaure V."/>
            <person name="Mottier S."/>
            <person name="Galibert F."/>
            <person name="Aves S.J."/>
            <person name="Xiang Z."/>
            <person name="Hunt C."/>
            <person name="Moore K."/>
            <person name="Hurst S.M."/>
            <person name="Lucas M."/>
            <person name="Rochet M."/>
            <person name="Gaillardin C."/>
            <person name="Tallada V.A."/>
            <person name="Garzon A."/>
            <person name="Thode G."/>
            <person name="Daga R.R."/>
            <person name="Cruzado L."/>
            <person name="Jimenez J."/>
            <person name="Sanchez M."/>
            <person name="del Rey F."/>
            <person name="Benito J."/>
            <person name="Dominguez A."/>
            <person name="Revuelta J.L."/>
            <person name="Moreno S."/>
            <person name="Armstrong J."/>
            <person name="Forsburg S.L."/>
            <person name="Cerutti L."/>
            <person name="Lowe T."/>
            <person name="McCombie W.R."/>
            <person name="Paulsen I."/>
            <person name="Potashkin J."/>
            <person name="Shpakovski G.V."/>
            <person name="Ussery D."/>
            <person name="Barrell B.G."/>
            <person name="Nurse P."/>
        </authorList>
    </citation>
    <scope>NUCLEOTIDE SEQUENCE [LARGE SCALE GENOMIC DNA]</scope>
    <source>
        <strain>972 / ATCC 24843</strain>
    </source>
</reference>
<reference key="2">
    <citation type="journal article" date="2002" name="Mol. Cell. Biol.">
        <title>Proteomics analysis reveals stable multiprotein complexes in both fission and budding yeasts containing Myb-related Cdc5p/Cef1p, novel pre-mRNA splicing factors, and snRNAs.</title>
        <authorList>
            <person name="Ohi M.D."/>
            <person name="Link A.J."/>
            <person name="Ren L."/>
            <person name="Jennings J.L."/>
            <person name="McDonald W.H."/>
            <person name="Gould K.L."/>
        </authorList>
    </citation>
    <scope>IDENTIFICATION IN THE CWF COMPLEX</scope>
    <scope>IDENTIFICATION BY MASS SPECTROMETRY</scope>
</reference>
<sequence>MEKEKLTNRTSTHKFNETDRETNHSRRHRHHHSRHRESKHGRHDRSERPSSREAGDRSRHERFSKEPLEVKKLPVENEYFDSKFASASSMPSSKDNPQNNDFTNSLQGLDFGTFGSRIQREPIDRKSNKPGEIFVGATLQNESSTSTEHKDIEQLETEINESGINYKIGDNGSRWRMMKLKRVFDMAQDQRRPVEEVALERYGSLKEFDFALEERDELELRKRTRKVQKEVPTGELYEKRCADEFKTRKDSGNGATYYKVIPDPSVNKDTPTESDLNRLKADLLRAQLKKDPNYESLEREYQKACDDFENSLHPSENSNSQATIPSKKRNFDDPTIDEMVQEEKLLNKQRKYGQNYEYAKQIAKDKTYSNNLDYLDENAGKLSNRMKRGDVSLAQISSGGDLKKINHVLDTCPLCLNYETQPLAPVISLSHRAYVSLPTQPELAKYHCLIVPTGHRINTLSCDEDEWDEIRNFMKCIALMFDSMNLGVIFYENAPSPQRYMHTAIECIPVSKRILSLAPAYFREALSTSDEEWSQHRKIIDTLEGSKKYGKWAFRKMMVKELGYFHVWFSIDGGYGHVVEDEKAWGRHDQVPRQVFASMLNLPPEVIRRKGSWTGKKDPREDMFRSRFEKFDWTKGLID</sequence>
<keyword id="KW-0002">3D-structure</keyword>
<keyword id="KW-0507">mRNA processing</keyword>
<keyword id="KW-0508">mRNA splicing</keyword>
<keyword id="KW-0539">Nucleus</keyword>
<keyword id="KW-1185">Reference proteome</keyword>
<keyword id="KW-0747">Spliceosome</keyword>
<proteinExistence type="evidence at protein level"/>
<accession>Q09909</accession>
<gene>
    <name type="primary">cwf19</name>
    <name type="ORF">SPAC30D11.09</name>
</gene>
<dbReference type="EMBL" id="CU329670">
    <property type="protein sequence ID" value="CAA91895.1"/>
    <property type="molecule type" value="Genomic_DNA"/>
</dbReference>
<dbReference type="PIR" id="T38590">
    <property type="entry name" value="S62567"/>
</dbReference>
<dbReference type="RefSeq" id="NP_593208.1">
    <property type="nucleotide sequence ID" value="NM_001018604.2"/>
</dbReference>
<dbReference type="PDB" id="3JB9">
    <property type="method" value="EM"/>
    <property type="resolution" value="3.60 A"/>
    <property type="chains" value="c=1-639"/>
</dbReference>
<dbReference type="PDBsum" id="3JB9"/>
<dbReference type="SMR" id="Q09909"/>
<dbReference type="BioGRID" id="279618">
    <property type="interactions" value="101"/>
</dbReference>
<dbReference type="FunCoup" id="Q09909">
    <property type="interactions" value="122"/>
</dbReference>
<dbReference type="IntAct" id="Q09909">
    <property type="interactions" value="4"/>
</dbReference>
<dbReference type="STRING" id="284812.Q09909"/>
<dbReference type="iPTMnet" id="Q09909"/>
<dbReference type="PaxDb" id="4896-SPAC30D11.09.1"/>
<dbReference type="EnsemblFungi" id="SPAC30D11.09.1">
    <property type="protein sequence ID" value="SPAC30D11.09.1:pep"/>
    <property type="gene ID" value="SPAC30D11.09"/>
</dbReference>
<dbReference type="GeneID" id="2543189"/>
<dbReference type="KEGG" id="spo:2543189"/>
<dbReference type="PomBase" id="SPAC30D11.09">
    <property type="gene designation" value="cwf19"/>
</dbReference>
<dbReference type="VEuPathDB" id="FungiDB:SPAC30D11.09"/>
<dbReference type="eggNOG" id="KOG2477">
    <property type="taxonomic scope" value="Eukaryota"/>
</dbReference>
<dbReference type="HOGENOM" id="CLU_015540_2_1_1"/>
<dbReference type="InParanoid" id="Q09909"/>
<dbReference type="OMA" id="MVEFASH"/>
<dbReference type="PhylomeDB" id="Q09909"/>
<dbReference type="EvolutionaryTrace" id="Q09909"/>
<dbReference type="PRO" id="PR:Q09909"/>
<dbReference type="Proteomes" id="UP000002485">
    <property type="component" value="Chromosome I"/>
</dbReference>
<dbReference type="GO" id="GO:0071014">
    <property type="term" value="C:post-mRNA release spliceosomal complex"/>
    <property type="evidence" value="ECO:0000314"/>
    <property type="project" value="PomBase"/>
</dbReference>
<dbReference type="GO" id="GO:0000974">
    <property type="term" value="C:Prp19 complex"/>
    <property type="evidence" value="ECO:0000314"/>
    <property type="project" value="PomBase"/>
</dbReference>
<dbReference type="GO" id="GO:0005681">
    <property type="term" value="C:spliceosomal complex"/>
    <property type="evidence" value="ECO:0000314"/>
    <property type="project" value="PomBase"/>
</dbReference>
<dbReference type="GO" id="GO:0005684">
    <property type="term" value="C:U2-type spliceosomal complex"/>
    <property type="evidence" value="ECO:0000314"/>
    <property type="project" value="PomBase"/>
</dbReference>
<dbReference type="GO" id="GO:0045292">
    <property type="term" value="P:mRNA cis splicing, via spliceosome"/>
    <property type="evidence" value="ECO:0000315"/>
    <property type="project" value="PomBase"/>
</dbReference>
<dbReference type="GO" id="GO:0000398">
    <property type="term" value="P:mRNA splicing, via spliceosome"/>
    <property type="evidence" value="ECO:0000318"/>
    <property type="project" value="GO_Central"/>
</dbReference>
<dbReference type="Gene3D" id="3.30.428.10">
    <property type="entry name" value="HIT-like"/>
    <property type="match status" value="1"/>
</dbReference>
<dbReference type="InterPro" id="IPR040194">
    <property type="entry name" value="Cwf19-like"/>
</dbReference>
<dbReference type="InterPro" id="IPR006768">
    <property type="entry name" value="Cwf19-like_C_dom-1"/>
</dbReference>
<dbReference type="InterPro" id="IPR006767">
    <property type="entry name" value="Cwf19-like_C_dom-2"/>
</dbReference>
<dbReference type="InterPro" id="IPR036265">
    <property type="entry name" value="HIT-like_sf"/>
</dbReference>
<dbReference type="PANTHER" id="PTHR12072">
    <property type="entry name" value="CWF19, CELL CYCLE CONTROL PROTEIN"/>
    <property type="match status" value="1"/>
</dbReference>
<dbReference type="PANTHER" id="PTHR12072:SF5">
    <property type="entry name" value="CWF19-LIKE PROTEIN 2"/>
    <property type="match status" value="1"/>
</dbReference>
<dbReference type="Pfam" id="PF04677">
    <property type="entry name" value="CwfJ_C_1"/>
    <property type="match status" value="1"/>
</dbReference>
<dbReference type="Pfam" id="PF04676">
    <property type="entry name" value="CwfJ_C_2"/>
    <property type="match status" value="1"/>
</dbReference>
<dbReference type="SUPFAM" id="SSF54197">
    <property type="entry name" value="HIT-like"/>
    <property type="match status" value="1"/>
</dbReference>
<organism>
    <name type="scientific">Schizosaccharomyces pombe (strain 972 / ATCC 24843)</name>
    <name type="common">Fission yeast</name>
    <dbReference type="NCBI Taxonomy" id="284812"/>
    <lineage>
        <taxon>Eukaryota</taxon>
        <taxon>Fungi</taxon>
        <taxon>Dikarya</taxon>
        <taxon>Ascomycota</taxon>
        <taxon>Taphrinomycotina</taxon>
        <taxon>Schizosaccharomycetes</taxon>
        <taxon>Schizosaccharomycetales</taxon>
        <taxon>Schizosaccharomycetaceae</taxon>
        <taxon>Schizosaccharomyces</taxon>
    </lineage>
</organism>
<feature type="chain" id="PRO_0000079614" description="Pre-mRNA-splicing factor cwf19">
    <location>
        <begin position="1"/>
        <end position="639"/>
    </location>
</feature>
<feature type="region of interest" description="Disordered" evidence="1">
    <location>
        <begin position="1"/>
        <end position="75"/>
    </location>
</feature>
<feature type="region of interest" description="Disordered" evidence="1">
    <location>
        <begin position="86"/>
        <end position="105"/>
    </location>
</feature>
<feature type="region of interest" description="Disordered" evidence="1">
    <location>
        <begin position="309"/>
        <end position="332"/>
    </location>
</feature>
<feature type="compositionally biased region" description="Basic and acidic residues" evidence="1">
    <location>
        <begin position="14"/>
        <end position="24"/>
    </location>
</feature>
<feature type="compositionally biased region" description="Basic residues" evidence="1">
    <location>
        <begin position="25"/>
        <end position="43"/>
    </location>
</feature>
<feature type="compositionally biased region" description="Basic and acidic residues" evidence="1">
    <location>
        <begin position="44"/>
        <end position="75"/>
    </location>
</feature>
<feature type="compositionally biased region" description="Polar residues" evidence="1">
    <location>
        <begin position="95"/>
        <end position="105"/>
    </location>
</feature>
<feature type="compositionally biased region" description="Polar residues" evidence="1">
    <location>
        <begin position="312"/>
        <end position="324"/>
    </location>
</feature>